<comment type="similarity">
    <text evidence="3">Belongs to the bacterial ribosomal protein bL32 family.</text>
</comment>
<dbReference type="EMBL" id="AE004439">
    <property type="protein sequence ID" value="AAK03996.1"/>
    <property type="molecule type" value="Genomic_DNA"/>
</dbReference>
<dbReference type="RefSeq" id="WP_005719398.1">
    <property type="nucleotide sequence ID" value="NC_002663.1"/>
</dbReference>
<dbReference type="SMR" id="Q9CJS9"/>
<dbReference type="STRING" id="272843.PM1912"/>
<dbReference type="EnsemblBacteria" id="AAK03996">
    <property type="protein sequence ID" value="AAK03996"/>
    <property type="gene ID" value="PM1912"/>
</dbReference>
<dbReference type="GeneID" id="77207256"/>
<dbReference type="KEGG" id="pmu:PM1912"/>
<dbReference type="HOGENOM" id="CLU_129084_2_1_6"/>
<dbReference type="OrthoDB" id="9801927at2"/>
<dbReference type="Proteomes" id="UP000000809">
    <property type="component" value="Chromosome"/>
</dbReference>
<dbReference type="GO" id="GO:0015934">
    <property type="term" value="C:large ribosomal subunit"/>
    <property type="evidence" value="ECO:0007669"/>
    <property type="project" value="InterPro"/>
</dbReference>
<dbReference type="GO" id="GO:0003735">
    <property type="term" value="F:structural constituent of ribosome"/>
    <property type="evidence" value="ECO:0007669"/>
    <property type="project" value="InterPro"/>
</dbReference>
<dbReference type="GO" id="GO:0006412">
    <property type="term" value="P:translation"/>
    <property type="evidence" value="ECO:0007669"/>
    <property type="project" value="UniProtKB-UniRule"/>
</dbReference>
<dbReference type="Gene3D" id="1.20.5.640">
    <property type="entry name" value="Single helix bin"/>
    <property type="match status" value="1"/>
</dbReference>
<dbReference type="HAMAP" id="MF_00340">
    <property type="entry name" value="Ribosomal_bL32"/>
    <property type="match status" value="1"/>
</dbReference>
<dbReference type="InterPro" id="IPR002677">
    <property type="entry name" value="Ribosomal_bL32"/>
</dbReference>
<dbReference type="InterPro" id="IPR044957">
    <property type="entry name" value="Ribosomal_bL32_bact"/>
</dbReference>
<dbReference type="InterPro" id="IPR011332">
    <property type="entry name" value="Ribosomal_zn-bd"/>
</dbReference>
<dbReference type="NCBIfam" id="TIGR01031">
    <property type="entry name" value="rpmF_bact"/>
    <property type="match status" value="1"/>
</dbReference>
<dbReference type="PANTHER" id="PTHR35534">
    <property type="entry name" value="50S RIBOSOMAL PROTEIN L32"/>
    <property type="match status" value="1"/>
</dbReference>
<dbReference type="PANTHER" id="PTHR35534:SF1">
    <property type="entry name" value="LARGE RIBOSOMAL SUBUNIT PROTEIN BL32"/>
    <property type="match status" value="1"/>
</dbReference>
<dbReference type="Pfam" id="PF01783">
    <property type="entry name" value="Ribosomal_L32p"/>
    <property type="match status" value="1"/>
</dbReference>
<dbReference type="SUPFAM" id="SSF57829">
    <property type="entry name" value="Zn-binding ribosomal proteins"/>
    <property type="match status" value="1"/>
</dbReference>
<feature type="initiator methionine" description="Removed" evidence="1">
    <location>
        <position position="1"/>
    </location>
</feature>
<feature type="chain" id="PRO_0000172381" description="Large ribosomal subunit protein bL32">
    <location>
        <begin position="2"/>
        <end position="56"/>
    </location>
</feature>
<feature type="region of interest" description="Disordered" evidence="2">
    <location>
        <begin position="1"/>
        <end position="37"/>
    </location>
</feature>
<feature type="compositionally biased region" description="Basic residues" evidence="2">
    <location>
        <begin position="7"/>
        <end position="16"/>
    </location>
</feature>
<protein>
    <recommendedName>
        <fullName evidence="3">Large ribosomal subunit protein bL32</fullName>
    </recommendedName>
    <alternativeName>
        <fullName>50S ribosomal protein L32</fullName>
    </alternativeName>
</protein>
<keyword id="KW-1185">Reference proteome</keyword>
<keyword id="KW-0687">Ribonucleoprotein</keyword>
<keyword id="KW-0689">Ribosomal protein</keyword>
<organism>
    <name type="scientific">Pasteurella multocida (strain Pm70)</name>
    <dbReference type="NCBI Taxonomy" id="272843"/>
    <lineage>
        <taxon>Bacteria</taxon>
        <taxon>Pseudomonadati</taxon>
        <taxon>Pseudomonadota</taxon>
        <taxon>Gammaproteobacteria</taxon>
        <taxon>Pasteurellales</taxon>
        <taxon>Pasteurellaceae</taxon>
        <taxon>Pasteurella</taxon>
    </lineage>
</organism>
<accession>Q9CJS9</accession>
<sequence>MAVQQNKKSRSRRDMRRSHDALTTAAISVDKASGEKHLRHHVTADGYYRGRKVINK</sequence>
<evidence type="ECO:0000250" key="1"/>
<evidence type="ECO:0000256" key="2">
    <source>
        <dbReference type="SAM" id="MobiDB-lite"/>
    </source>
</evidence>
<evidence type="ECO:0000305" key="3"/>
<gene>
    <name type="primary">rpmF</name>
    <name type="synonym">rpl32</name>
    <name type="ordered locus">PM1912</name>
</gene>
<proteinExistence type="inferred from homology"/>
<reference key="1">
    <citation type="journal article" date="2001" name="Proc. Natl. Acad. Sci. U.S.A.">
        <title>Complete genomic sequence of Pasteurella multocida Pm70.</title>
        <authorList>
            <person name="May B.J."/>
            <person name="Zhang Q."/>
            <person name="Li L.L."/>
            <person name="Paustian M.L."/>
            <person name="Whittam T.S."/>
            <person name="Kapur V."/>
        </authorList>
    </citation>
    <scope>NUCLEOTIDE SEQUENCE [LARGE SCALE GENOMIC DNA]</scope>
    <source>
        <strain>Pm70</strain>
    </source>
</reference>
<name>RL32_PASMU</name>